<sequence>MQEGQNRKTSSLSILAIAGVEPYQEKPGEEYMNEAQLAHFRRILEAWRNQLRDEVDRTVTHMQDEAANFPDPVDRAAQEEEFSLELRNRDRERKLIKKIEKTLKKVEDEDFGYCESCGVEIGIRRLEARPTADLCIDCKTLAEIREKQMAG</sequence>
<name>DKSA_ECOLI</name>
<accession>P0ABS1</accession>
<accession>P18274</accession>
<gene>
    <name evidence="1" type="primary">dksA</name>
    <name type="ordered locus">b0145</name>
    <name type="ordered locus">JW0141</name>
</gene>
<dbReference type="EMBL" id="M34945">
    <property type="protein sequence ID" value="AAA23687.1"/>
    <property type="molecule type" value="Genomic_DNA"/>
</dbReference>
<dbReference type="EMBL" id="U00096">
    <property type="protein sequence ID" value="AAC73256.1"/>
    <property type="molecule type" value="Genomic_DNA"/>
</dbReference>
<dbReference type="EMBL" id="AP009048">
    <property type="protein sequence ID" value="BAB96722.1"/>
    <property type="molecule type" value="Genomic_DNA"/>
</dbReference>
<dbReference type="EMBL" id="M60726">
    <property type="protein sequence ID" value="AAA72978.1"/>
    <property type="molecule type" value="Genomic_DNA"/>
</dbReference>
<dbReference type="PIR" id="S45214">
    <property type="entry name" value="S45214"/>
</dbReference>
<dbReference type="RefSeq" id="NP_414687.1">
    <property type="nucleotide sequence ID" value="NC_000913.3"/>
</dbReference>
<dbReference type="RefSeq" id="WP_001155227.1">
    <property type="nucleotide sequence ID" value="NZ_STEB01000010.1"/>
</dbReference>
<dbReference type="PDB" id="1TJL">
    <property type="method" value="X-ray"/>
    <property type="resolution" value="2.00 A"/>
    <property type="chains" value="A/B/C/D/E/F/G/H/I/J=1-151"/>
</dbReference>
<dbReference type="PDB" id="5VSW">
    <property type="method" value="X-ray"/>
    <property type="resolution" value="4.29 A"/>
    <property type="chains" value="M=1-151"/>
</dbReference>
<dbReference type="PDB" id="5W1T">
    <property type="method" value="X-ray"/>
    <property type="resolution" value="4.50 A"/>
    <property type="chains" value="M/N=1-151"/>
</dbReference>
<dbReference type="PDB" id="7KHE">
    <property type="method" value="EM"/>
    <property type="resolution" value="3.58 A"/>
    <property type="chains" value="M=1-151"/>
</dbReference>
<dbReference type="PDB" id="7KHI">
    <property type="method" value="EM"/>
    <property type="resolution" value="3.62 A"/>
    <property type="chains" value="M=1-151"/>
</dbReference>
<dbReference type="PDBsum" id="1TJL"/>
<dbReference type="PDBsum" id="5VSW"/>
<dbReference type="PDBsum" id="5W1T"/>
<dbReference type="PDBsum" id="7KHE"/>
<dbReference type="PDBsum" id="7KHI"/>
<dbReference type="EMDB" id="EMD-21881"/>
<dbReference type="EMDB" id="EMD-21883"/>
<dbReference type="SMR" id="P0ABS1"/>
<dbReference type="BioGRID" id="4259742">
    <property type="interactions" value="57"/>
</dbReference>
<dbReference type="BioGRID" id="849250">
    <property type="interactions" value="1"/>
</dbReference>
<dbReference type="DIP" id="DIP-31875N"/>
<dbReference type="FunCoup" id="P0ABS1">
    <property type="interactions" value="432"/>
</dbReference>
<dbReference type="IntAct" id="P0ABS1">
    <property type="interactions" value="12"/>
</dbReference>
<dbReference type="MINT" id="P0ABS1"/>
<dbReference type="STRING" id="511145.b0145"/>
<dbReference type="jPOST" id="P0ABS1"/>
<dbReference type="PaxDb" id="511145-b0145"/>
<dbReference type="EnsemblBacteria" id="AAC73256">
    <property type="protein sequence ID" value="AAC73256"/>
    <property type="gene ID" value="b0145"/>
</dbReference>
<dbReference type="GeneID" id="93777282"/>
<dbReference type="GeneID" id="944850"/>
<dbReference type="KEGG" id="ecj:JW0141"/>
<dbReference type="KEGG" id="eco:b0145"/>
<dbReference type="KEGG" id="ecoc:C3026_00630"/>
<dbReference type="PATRIC" id="fig|1411691.4.peg.2136"/>
<dbReference type="EchoBASE" id="EB0226"/>
<dbReference type="eggNOG" id="COG1734">
    <property type="taxonomic scope" value="Bacteria"/>
</dbReference>
<dbReference type="HOGENOM" id="CLU_043144_2_0_6"/>
<dbReference type="InParanoid" id="P0ABS1"/>
<dbReference type="OMA" id="EENVNHP"/>
<dbReference type="OrthoDB" id="9803742at2"/>
<dbReference type="PhylomeDB" id="P0ABS1"/>
<dbReference type="BioCyc" id="EcoCyc:EG10230-MONOMER"/>
<dbReference type="EvolutionaryTrace" id="P0ABS1"/>
<dbReference type="PRO" id="PR:P0ABS1"/>
<dbReference type="Proteomes" id="UP000000625">
    <property type="component" value="Chromosome"/>
</dbReference>
<dbReference type="GO" id="GO:0005737">
    <property type="term" value="C:cytoplasm"/>
    <property type="evidence" value="ECO:0007005"/>
    <property type="project" value="UniProtKB"/>
</dbReference>
<dbReference type="GO" id="GO:0005829">
    <property type="term" value="C:cytosol"/>
    <property type="evidence" value="ECO:0000314"/>
    <property type="project" value="EcoCyc"/>
</dbReference>
<dbReference type="GO" id="GO:0097216">
    <property type="term" value="F:guanosine tetraphosphate binding"/>
    <property type="evidence" value="ECO:0000314"/>
    <property type="project" value="EcoCyc"/>
</dbReference>
<dbReference type="GO" id="GO:0008270">
    <property type="term" value="F:zinc ion binding"/>
    <property type="evidence" value="ECO:0007669"/>
    <property type="project" value="UniProtKB-UniRule"/>
</dbReference>
<dbReference type="GO" id="GO:0006302">
    <property type="term" value="P:double-strand break repair"/>
    <property type="evidence" value="ECO:0000315"/>
    <property type="project" value="EcoCyc"/>
</dbReference>
<dbReference type="GO" id="GO:0006355">
    <property type="term" value="P:regulation of DNA-templated transcription"/>
    <property type="evidence" value="ECO:0000318"/>
    <property type="project" value="GO_Central"/>
</dbReference>
<dbReference type="DisProt" id="DP00414"/>
<dbReference type="FunFam" id="1.20.120.910:FF:000001">
    <property type="entry name" value="RNA polymerase-binding transcription factor DksA"/>
    <property type="match status" value="1"/>
</dbReference>
<dbReference type="Gene3D" id="1.20.120.910">
    <property type="entry name" value="DksA, coiled-coil domain"/>
    <property type="match status" value="1"/>
</dbReference>
<dbReference type="HAMAP" id="MF_00926">
    <property type="entry name" value="DksA"/>
    <property type="match status" value="1"/>
</dbReference>
<dbReference type="InterPro" id="IPR048489">
    <property type="entry name" value="DksA_N"/>
</dbReference>
<dbReference type="InterPro" id="IPR012784">
    <property type="entry name" value="DksA_RNA_pol-bd"/>
</dbReference>
<dbReference type="InterPro" id="IPR037187">
    <property type="entry name" value="DnaK_N"/>
</dbReference>
<dbReference type="InterPro" id="IPR020460">
    <property type="entry name" value="Znf_C4-type_bac"/>
</dbReference>
<dbReference type="InterPro" id="IPR000962">
    <property type="entry name" value="Znf_DskA_TraR"/>
</dbReference>
<dbReference type="InterPro" id="IPR020458">
    <property type="entry name" value="Znf_DskA_TraR_CS"/>
</dbReference>
<dbReference type="NCBIfam" id="TIGR02420">
    <property type="entry name" value="dksA"/>
    <property type="match status" value="1"/>
</dbReference>
<dbReference type="NCBIfam" id="NF008045">
    <property type="entry name" value="PRK10778.1"/>
    <property type="match status" value="1"/>
</dbReference>
<dbReference type="PANTHER" id="PTHR33823:SF2">
    <property type="entry name" value="RNA POLYMERASE-BINDING TRANSCRIPTION FACTOR DKSA"/>
    <property type="match status" value="1"/>
</dbReference>
<dbReference type="PANTHER" id="PTHR33823">
    <property type="entry name" value="RNA POLYMERASE-BINDING TRANSCRIPTION FACTOR DKSA-RELATED"/>
    <property type="match status" value="1"/>
</dbReference>
<dbReference type="Pfam" id="PF21157">
    <property type="entry name" value="DksA_N"/>
    <property type="match status" value="1"/>
</dbReference>
<dbReference type="Pfam" id="PF01258">
    <property type="entry name" value="zf-dskA_traR"/>
    <property type="match status" value="1"/>
</dbReference>
<dbReference type="PRINTS" id="PR00618">
    <property type="entry name" value="DKSAZNFINGER"/>
</dbReference>
<dbReference type="SUPFAM" id="SSF109635">
    <property type="entry name" value="DnaK suppressor protein DksA, alpha-hairpin domain"/>
    <property type="match status" value="1"/>
</dbReference>
<dbReference type="SUPFAM" id="SSF57716">
    <property type="entry name" value="Glucocorticoid receptor-like (DNA-binding domain)"/>
    <property type="match status" value="1"/>
</dbReference>
<dbReference type="PROSITE" id="PS01102">
    <property type="entry name" value="ZF_DKSA_1"/>
    <property type="match status" value="1"/>
</dbReference>
<dbReference type="PROSITE" id="PS51128">
    <property type="entry name" value="ZF_DKSA_2"/>
    <property type="match status" value="1"/>
</dbReference>
<organism>
    <name type="scientific">Escherichia coli (strain K12)</name>
    <dbReference type="NCBI Taxonomy" id="83333"/>
    <lineage>
        <taxon>Bacteria</taxon>
        <taxon>Pseudomonadati</taxon>
        <taxon>Pseudomonadota</taxon>
        <taxon>Gammaproteobacteria</taxon>
        <taxon>Enterobacterales</taxon>
        <taxon>Enterobacteriaceae</taxon>
        <taxon>Escherichia</taxon>
    </lineage>
</organism>
<reference key="1">
    <citation type="journal article" date="1990" name="J. Bacteriol.">
        <title>Identification and characterization of a new Escherichia coli gene that is a dosage-dependent suppressor of a dnaK deletion mutation.</title>
        <authorList>
            <person name="Kang P.J."/>
            <person name="Craig E.A."/>
        </authorList>
    </citation>
    <scope>NUCLEOTIDE SEQUENCE [GENOMIC DNA]</scope>
</reference>
<reference key="2">
    <citation type="journal article" date="1994" name="Nucleic Acids Res.">
        <title>Systematic sequencing of the Escherichia coli genome: analysis of the 2.4-4.1 min (110,917-193,643 bp) region.</title>
        <authorList>
            <person name="Fujita N."/>
            <person name="Mori H."/>
            <person name="Yura T."/>
            <person name="Ishihama A."/>
        </authorList>
    </citation>
    <scope>NUCLEOTIDE SEQUENCE [LARGE SCALE GENOMIC DNA]</scope>
    <source>
        <strain>K12 / W3110 / ATCC 27325 / DSM 5911</strain>
    </source>
</reference>
<reference key="3">
    <citation type="journal article" date="1997" name="Science">
        <title>The complete genome sequence of Escherichia coli K-12.</title>
        <authorList>
            <person name="Blattner F.R."/>
            <person name="Plunkett G. III"/>
            <person name="Bloch C.A."/>
            <person name="Perna N.T."/>
            <person name="Burland V."/>
            <person name="Riley M."/>
            <person name="Collado-Vides J."/>
            <person name="Glasner J.D."/>
            <person name="Rode C.K."/>
            <person name="Mayhew G.F."/>
            <person name="Gregor J."/>
            <person name="Davis N.W."/>
            <person name="Kirkpatrick H.A."/>
            <person name="Goeden M.A."/>
            <person name="Rose D.J."/>
            <person name="Mau B."/>
            <person name="Shao Y."/>
        </authorList>
    </citation>
    <scope>NUCLEOTIDE SEQUENCE [LARGE SCALE GENOMIC DNA]</scope>
    <source>
        <strain>K12 / MG1655 / ATCC 47076</strain>
    </source>
</reference>
<reference key="4">
    <citation type="journal article" date="2006" name="Mol. Syst. Biol.">
        <title>Highly accurate genome sequences of Escherichia coli K-12 strains MG1655 and W3110.</title>
        <authorList>
            <person name="Hayashi K."/>
            <person name="Morooka N."/>
            <person name="Yamamoto Y."/>
            <person name="Fujita K."/>
            <person name="Isono K."/>
            <person name="Choi S."/>
            <person name="Ohtsubo E."/>
            <person name="Baba T."/>
            <person name="Wanner B.L."/>
            <person name="Mori H."/>
            <person name="Horiuchi T."/>
        </authorList>
    </citation>
    <scope>NUCLEOTIDE SEQUENCE [LARGE SCALE GENOMIC DNA]</scope>
    <source>
        <strain>K12 / W3110 / ATCC 27325 / DSM 5911</strain>
    </source>
</reference>
<reference key="5">
    <citation type="journal article" date="1991" name="J. Bacteriol.">
        <title>Nucleotide sequence and characterization of the sfs1 gene: sfs1 is involved in CRP*-dependent mal gene expression in Escherichia coli.</title>
        <authorList>
            <person name="Kawamukai M."/>
            <person name="Utsumi R."/>
            <person name="Takeda K."/>
            <person name="Higashi A."/>
            <person name="Matsuda H."/>
            <person name="Choi Y.-L."/>
            <person name="Komano T."/>
        </authorList>
    </citation>
    <scope>NUCLEOTIDE SEQUENCE [GENOMIC DNA] OF 1-36</scope>
</reference>
<reference key="6">
    <citation type="journal article" date="1997" name="Electrophoresis">
        <title>Comparing the predicted and observed properties of proteins encoded in the genome of Escherichia coli K-12.</title>
        <authorList>
            <person name="Link A.J."/>
            <person name="Robison K."/>
            <person name="Church G.M."/>
        </authorList>
    </citation>
    <scope>PROTEIN SEQUENCE OF 1-8</scope>
    <source>
        <strain>K12 / EMG2</strain>
    </source>
</reference>
<reference key="7">
    <citation type="journal article" date="1998" name="J. Mol. Biol.">
        <title>Protein identification with N and C-terminal sequence tags in proteome projects.</title>
        <authorList>
            <person name="Wilkins M.R."/>
            <person name="Gasteiger E."/>
            <person name="Tonella L."/>
            <person name="Ou K."/>
            <person name="Tyler M."/>
            <person name="Sanchez J.-C."/>
            <person name="Gooley A.A."/>
            <person name="Walsh B.J."/>
            <person name="Bairoch A."/>
            <person name="Appel R.D."/>
            <person name="Williams K.L."/>
            <person name="Hochstrasser D.F."/>
        </authorList>
    </citation>
    <scope>PROTEIN SEQUENCE OF 1-4</scope>
    <source>
        <strain>K12 / W3110 / ATCC 27325 / DSM 5911</strain>
    </source>
</reference>
<reference key="8">
    <citation type="journal article" date="2002" name="J. Bacteriol.">
        <title>DksA affects ppGpp induction of RpoS at a translational level.</title>
        <authorList>
            <person name="Brown L."/>
            <person name="Gentry D."/>
            <person name="Elliott T."/>
            <person name="Cashel M."/>
        </authorList>
    </citation>
    <scope>DISRUPTION PHENOTYPE</scope>
    <source>
        <strain>K12 / MG1655 / ATCC 47076</strain>
    </source>
</reference>
<reference key="9">
    <citation type="journal article" date="2004" name="Cell">
        <title>DksA: a critical component of the transcription initiation machinery that potentiates the regulation of rRNA promoters by ppGpp and the initiating NTP.</title>
        <authorList>
            <person name="Paul B.J."/>
            <person name="Barker M.M."/>
            <person name="Ross W."/>
            <person name="Schneider D.A."/>
            <person name="Webb C."/>
            <person name="Foster J.W."/>
            <person name="Gourse R.L."/>
        </authorList>
    </citation>
    <scope>FUNCTION</scope>
    <scope>INTERACTION WITH RNAP</scope>
</reference>
<reference key="10">
    <citation type="journal article" date="2005" name="Mol. Microbiol.">
        <title>RecN protein and transcription factor DksA combine to promote faithful recombinational repair of DNA double-strand breaks.</title>
        <authorList>
            <person name="Meddows T.R."/>
            <person name="Savory A.P."/>
            <person name="Grove J.I."/>
            <person name="Moore T."/>
            <person name="Lloyd R.G."/>
        </authorList>
    </citation>
    <scope>FUNCTION IN DNA REPAIR</scope>
</reference>
<reference key="11">
    <citation type="journal article" date="2006" name="Electrophoresis">
        <title>A complexomic study of Escherichia coli using two-dimensional blue native/SDS polyacrylamide gel electrophoresis.</title>
        <authorList>
            <person name="Lasserre J.P."/>
            <person name="Beyne E."/>
            <person name="Pyndiah S."/>
            <person name="Lapaillerie D."/>
            <person name="Claverol S."/>
            <person name="Bonneu M."/>
        </authorList>
    </citation>
    <scope>SUBCELLULAR LOCATION</scope>
</reference>
<reference key="12">
    <citation type="journal article" date="2006" name="J. Bacteriol.">
        <title>DksA is required for growth phase-dependent regulation, growth rate-dependent control, and stringent control of fis expression in Escherichia coli.</title>
        <authorList>
            <person name="Mallik P."/>
            <person name="Paul B.J."/>
            <person name="Rutherford S.T."/>
            <person name="Gourse R.L."/>
            <person name="Osuna R."/>
        </authorList>
    </citation>
    <scope>FUNCTION IN FIS REGULATION</scope>
    <source>
        <strain>K12 / MG1655 / ATCC 47076</strain>
    </source>
</reference>
<reference key="13">
    <citation type="journal article" date="2011" name="Mol. Microbiol.">
        <title>Circuitry linking the Csr and stringent response global regulatory systems.</title>
        <authorList>
            <person name="Edwards A.N."/>
            <person name="Patterson-Fortin L.M."/>
            <person name="Vakulskas C.A."/>
            <person name="Mercante J.W."/>
            <person name="Potrykus K."/>
            <person name="Vinella D."/>
            <person name="Camacho M.I."/>
            <person name="Fields J.A."/>
            <person name="Thompson S.A."/>
            <person name="Georgellis D."/>
            <person name="Cashel M."/>
            <person name="Babitzke P."/>
            <person name="Romeo T."/>
        </authorList>
    </citation>
    <scope>FUNCTION</scope>
    <scope>INDUCTION</scope>
    <scope>DISRUPTION PHENOTYPE</scope>
    <scope>MUTAGENESIS OF ASP-71 AND ASP-74</scope>
    <source>
        <strain>K12 / CF7789</strain>
    </source>
</reference>
<reference key="14">
    <citation type="journal article" date="2012" name="Nucleic Acids Res.">
        <title>Transcription initiation factor DksA has diverse effects on RNA chain elongation.</title>
        <authorList>
            <person name="Furman R."/>
            <person name="Sevostyanova A."/>
            <person name="Artsimovitch I."/>
        </authorList>
    </citation>
    <scope>FUNCTION</scope>
</reference>
<reference key="15">
    <citation type="journal article" date="2004" name="Cell">
        <title>Regulation through the secondary channel--structural framework for ppGpp-DksA synergism during transcription.</title>
        <authorList>
            <person name="Perederina A."/>
            <person name="Svetlov V."/>
            <person name="Vassylyeva M.N."/>
            <person name="Tahirov T.H."/>
            <person name="Yokoyama S."/>
            <person name="Artsimovitch I."/>
            <person name="Vassylyev D.G."/>
        </authorList>
    </citation>
    <scope>X-RAY CRYSTALLOGRAPHY (2.0 ANGSTROMS) IN COMPLEX WITH ZINC</scope>
    <scope>FUNCTION</scope>
    <scope>INTERACTION WITH RNAP</scope>
    <scope>MUTAGENESIS OF ASP-71 AND ASP-74</scope>
</reference>
<feature type="chain" id="PRO_0000187536" description="RNA polymerase-binding transcription factor DksA">
    <location>
        <begin position="1"/>
        <end position="151"/>
    </location>
</feature>
<feature type="zinc finger region" description="dksA C4-type" evidence="1">
    <location>
        <begin position="114"/>
        <end position="138"/>
    </location>
</feature>
<feature type="coiled-coil region" evidence="1">
    <location>
        <begin position="33"/>
        <end position="54"/>
    </location>
</feature>
<feature type="binding site" evidence="1 3">
    <location>
        <position position="114"/>
    </location>
    <ligand>
        <name>Zn(2+)</name>
        <dbReference type="ChEBI" id="CHEBI:29105"/>
    </ligand>
</feature>
<feature type="binding site" evidence="1 3">
    <location>
        <position position="117"/>
    </location>
    <ligand>
        <name>Zn(2+)</name>
        <dbReference type="ChEBI" id="CHEBI:29105"/>
    </ligand>
</feature>
<feature type="binding site" evidence="1 3">
    <location>
        <position position="135"/>
    </location>
    <ligand>
        <name>Zn(2+)</name>
        <dbReference type="ChEBI" id="CHEBI:29105"/>
    </ligand>
</feature>
<feature type="binding site" evidence="1 3">
    <location>
        <position position="138"/>
    </location>
    <ligand>
        <name>Zn(2+)</name>
        <dbReference type="ChEBI" id="CHEBI:29105"/>
    </ligand>
</feature>
<feature type="mutagenesis site" description="Does not increase ppGpp-dependent inhibition of transcription, but retains its ability to bind to RNAP; when associated with N-74. Increased transcription of its own RNA; when associated with N-74." evidence="3 8">
    <original>D</original>
    <variation>N</variation>
    <location>
        <position position="71"/>
    </location>
</feature>
<feature type="mutagenesis site" description="Does not increase ppGpp-dependent inhibition of transcription, but retains its ability to bind to RNAP; when associated with N-71. Increased transcription of its own RNA; when associated with N-71." evidence="3 8">
    <original>D</original>
    <variation>N</variation>
    <location>
        <position position="74"/>
    </location>
</feature>
<feature type="sequence conflict" description="In Ref. 6; AA sequence." evidence="10" ref="6">
    <original>G</original>
    <variation>Q</variation>
    <location>
        <position position="4"/>
    </location>
</feature>
<feature type="sequence conflict" description="In Ref. 1; AAA23687." evidence="10" ref="1">
    <original>KL</original>
    <variation>NV</variation>
    <location>
        <begin position="94"/>
        <end position="95"/>
    </location>
</feature>
<feature type="helix" evidence="12">
    <location>
        <begin position="13"/>
        <end position="17"/>
    </location>
</feature>
<feature type="helix" evidence="12">
    <location>
        <begin position="34"/>
        <end position="67"/>
    </location>
</feature>
<feature type="helix" evidence="12">
    <location>
        <begin position="72"/>
        <end position="74"/>
    </location>
</feature>
<feature type="helix" evidence="12">
    <location>
        <begin position="75"/>
        <end position="107"/>
    </location>
</feature>
<feature type="strand" evidence="12">
    <location>
        <begin position="115"/>
        <end position="118"/>
    </location>
</feature>
<feature type="helix" evidence="12">
    <location>
        <begin position="123"/>
        <end position="128"/>
    </location>
</feature>
<feature type="helix" evidence="12">
    <location>
        <begin position="136"/>
        <end position="150"/>
    </location>
</feature>
<keyword id="KW-0002">3D-structure</keyword>
<keyword id="KW-0175">Coiled coil</keyword>
<keyword id="KW-0963">Cytoplasm</keyword>
<keyword id="KW-0903">Direct protein sequencing</keyword>
<keyword id="KW-0479">Metal-binding</keyword>
<keyword id="KW-1185">Reference proteome</keyword>
<keyword id="KW-0862">Zinc</keyword>
<keyword id="KW-0863">Zinc-finger</keyword>
<evidence type="ECO:0000255" key="1">
    <source>
        <dbReference type="HAMAP-Rule" id="MF_00926"/>
    </source>
</evidence>
<evidence type="ECO:0000269" key="2">
    <source>
    </source>
</evidence>
<evidence type="ECO:0000269" key="3">
    <source>
    </source>
</evidence>
<evidence type="ECO:0000269" key="4">
    <source>
    </source>
</evidence>
<evidence type="ECO:0000269" key="5">
    <source>
    </source>
</evidence>
<evidence type="ECO:0000269" key="6">
    <source>
    </source>
</evidence>
<evidence type="ECO:0000269" key="7">
    <source>
    </source>
</evidence>
<evidence type="ECO:0000269" key="8">
    <source>
    </source>
</evidence>
<evidence type="ECO:0000269" key="9">
    <source>
    </source>
</evidence>
<evidence type="ECO:0000305" key="10"/>
<evidence type="ECO:0000305" key="11">
    <source>
    </source>
</evidence>
<evidence type="ECO:0007829" key="12">
    <source>
        <dbReference type="PDB" id="1TJL"/>
    </source>
</evidence>
<proteinExistence type="evidence at protein level"/>
<protein>
    <recommendedName>
        <fullName evidence="1">RNA polymerase-binding transcription factor DksA</fullName>
    </recommendedName>
    <alternativeName>
        <fullName>DnaK suppressor protein</fullName>
    </alternativeName>
</protein>
<comment type="function">
    <text evidence="1 3 4 5 7 8 9">Transcription factor that acts by binding directly to the RNA polymerase (RNAP). Required for negative regulation of rRNA expression and positive regulation of several amino acid biosynthesis promoters. Also required for regulation of fis expression. Binding to RNAP disrupts interaction of RNAP with DNA, inhibits formation of initiation complexes, and amplifies effects of ppGpp and the initiating NTP on rRNA transcription. Inhibits transcript elongation, exonucleolytic RNA cleavage and pyrophosphorolysis, and increases intrinsic termination. Also involved, with RecN, in repair of DNA double-strand breaks. Required, probably upstream of the two-component system BarA-UvrY, for expression of CsrA-antagonistic small RNAs CsrB and CsrC (PubMed:21488981).</text>
</comment>
<comment type="subunit">
    <text evidence="1 3 4">Interacts directly with the RNA polymerase.</text>
</comment>
<comment type="subcellular location">
    <subcellularLocation>
        <location evidence="1 6">Cytoplasm</location>
    </subcellularLocation>
</comment>
<comment type="induction">
    <text evidence="8">Expression levels are constant during exponential and stationary phase (at protein level) (PubMed:21488981). Negatively regulates its own transcription, translationally activated by CsrA (PubMed:21488981).</text>
</comment>
<comment type="disruption phenotype">
    <text evidence="2 8">Deletion blocks induction of rpoS by ppGpp, but does not alter relA expression, ppGpp regulation or RNA control during the stringent response (PubMed:12142416). Increased expression of ectopic dksA, 2-fold decreased expression of CsrA, 10-fold decreased expression of sRNAs CsrB and CsrC (PubMed:21488981).</text>
</comment>
<comment type="miscellaneous">
    <text evidence="11">Dosage-dependent suppressor of a dnaK deletion mutation. It suppressed not only the temperature-sensitive growth but also the filamentous phenotype of the dnaK deletion strain, while the defect of lambda growth is not suppressed (PubMed:2180916).</text>
</comment>
<comment type="similarity">
    <text evidence="1">Belongs to the DksA family.</text>
</comment>